<evidence type="ECO:0000255" key="1">
    <source>
        <dbReference type="HAMAP-Rule" id="MF_00465"/>
    </source>
</evidence>
<feature type="chain" id="PRO_1000135445" description="S-adenosylmethionine decarboxylase beta chain" evidence="1">
    <location>
        <begin position="1"/>
        <end position="111"/>
    </location>
</feature>
<feature type="chain" id="PRO_1000135446" description="S-adenosylmethionine decarboxylase alpha chain" evidence="1">
    <location>
        <begin position="112"/>
        <end position="264"/>
    </location>
</feature>
<feature type="active site" description="Schiff-base intermediate with substrate; via pyruvic acid" evidence="1">
    <location>
        <position position="112"/>
    </location>
</feature>
<feature type="active site" description="Proton acceptor; for processing activity" evidence="1">
    <location>
        <position position="117"/>
    </location>
</feature>
<feature type="active site" description="Proton donor; for catalytic activity" evidence="1">
    <location>
        <position position="140"/>
    </location>
</feature>
<feature type="site" description="Cleavage (non-hydrolytic); by autolysis" evidence="1">
    <location>
        <begin position="111"/>
        <end position="112"/>
    </location>
</feature>
<feature type="modified residue" description="Pyruvic acid (Ser); by autocatalysis" evidence="1">
    <location>
        <position position="112"/>
    </location>
</feature>
<sequence>MKKLKLHGFNNLTKSLSFCIYDICYAKTAEERDGYIAYIDELYNANRLTEILSETCSIIGANILNIARQDYEPQGASVTILVSEEPVDPKLIDKTEHPGPLPETVVAHLDKSHICVHTYPESHPEGGLCTFRADIEVSTCGVISPLKALNYLIHQLESDIVTIDYRVRGFTRDINGMKHFIDHEINSIQNFMSDDMKALYDMVDVNVYQENIFHTKMLLKEFDLKHYMFHTKPEDLTDSERQEITAALWKEMREIYYGRNMPAV</sequence>
<proteinExistence type="inferred from homology"/>
<name>SPED_ECO55</name>
<protein>
    <recommendedName>
        <fullName evidence="1">S-adenosylmethionine decarboxylase proenzyme</fullName>
        <shortName evidence="1">AdoMetDC</shortName>
        <shortName evidence="1">SAMDC</shortName>
        <ecNumber evidence="1">4.1.1.50</ecNumber>
    </recommendedName>
    <component>
        <recommendedName>
            <fullName evidence="1">S-adenosylmethionine decarboxylase beta chain</fullName>
        </recommendedName>
    </component>
    <component>
        <recommendedName>
            <fullName evidence="1">S-adenosylmethionine decarboxylase alpha chain</fullName>
        </recommendedName>
    </component>
</protein>
<comment type="function">
    <text evidence="1">Catalyzes the decarboxylation of S-adenosylmethionine to S-adenosylmethioninamine (dcAdoMet), the propylamine donor required for the synthesis of the polyamines spermine and spermidine from the diamine putrescine.</text>
</comment>
<comment type="catalytic activity">
    <reaction evidence="1">
        <text>S-adenosyl-L-methionine + H(+) = S-adenosyl 3-(methylsulfanyl)propylamine + CO2</text>
        <dbReference type="Rhea" id="RHEA:15981"/>
        <dbReference type="ChEBI" id="CHEBI:15378"/>
        <dbReference type="ChEBI" id="CHEBI:16526"/>
        <dbReference type="ChEBI" id="CHEBI:57443"/>
        <dbReference type="ChEBI" id="CHEBI:59789"/>
        <dbReference type="EC" id="4.1.1.50"/>
    </reaction>
</comment>
<comment type="cofactor">
    <cofactor evidence="1">
        <name>pyruvate</name>
        <dbReference type="ChEBI" id="CHEBI:15361"/>
    </cofactor>
    <text evidence="1">Binds 1 pyruvoyl group covalently per subunit.</text>
</comment>
<comment type="pathway">
    <text evidence="1">Amine and polyamine biosynthesis; S-adenosylmethioninamine biosynthesis; S-adenosylmethioninamine from S-adenosyl-L-methionine: step 1/1.</text>
</comment>
<comment type="subunit">
    <text evidence="1">Heterooctamer of four alpha and four beta chains arranged as a tetramer of alpha/beta heterodimers.</text>
</comment>
<comment type="PTM">
    <text evidence="1">Is synthesized initially as an inactive proenzyme. Formation of the active enzyme involves a self-maturation process in which the active site pyruvoyl group is generated from an internal serine residue via an autocatalytic post-translational modification. Two non-identical subunits are generated from the proenzyme in this reaction, and the pyruvate is formed at the N-terminus of the alpha chain, which is derived from the carboxyl end of the proenzyme. The post-translation cleavage follows an unusual pathway, termed non-hydrolytic serinolysis, in which the side chain hydroxyl group of the serine supplies its oxygen atom to form the C-terminus of the beta chain, while the remainder of the serine residue undergoes an oxidative deamination to produce ammonia and the pyruvoyl group blocking the N-terminus of the alpha chain.</text>
</comment>
<comment type="similarity">
    <text evidence="1">Belongs to the prokaryotic AdoMetDC family. Type 2 subfamily.</text>
</comment>
<gene>
    <name evidence="1" type="primary">speD</name>
    <name type="ordered locus">EC55989_0113</name>
</gene>
<accession>B7LFY7</accession>
<dbReference type="EC" id="4.1.1.50" evidence="1"/>
<dbReference type="EMBL" id="CU928145">
    <property type="protein sequence ID" value="CAU96001.1"/>
    <property type="molecule type" value="Genomic_DNA"/>
</dbReference>
<dbReference type="RefSeq" id="WP_000734287.1">
    <property type="nucleotide sequence ID" value="NC_011748.1"/>
</dbReference>
<dbReference type="GeneID" id="93777316"/>
<dbReference type="KEGG" id="eck:EC55989_0113"/>
<dbReference type="HOGENOM" id="CLU_092007_0_0_6"/>
<dbReference type="UniPathway" id="UPA00331">
    <property type="reaction ID" value="UER00451"/>
</dbReference>
<dbReference type="Proteomes" id="UP000000746">
    <property type="component" value="Chromosome"/>
</dbReference>
<dbReference type="GO" id="GO:0005829">
    <property type="term" value="C:cytosol"/>
    <property type="evidence" value="ECO:0007669"/>
    <property type="project" value="TreeGrafter"/>
</dbReference>
<dbReference type="GO" id="GO:0004014">
    <property type="term" value="F:adenosylmethionine decarboxylase activity"/>
    <property type="evidence" value="ECO:0007669"/>
    <property type="project" value="UniProtKB-UniRule"/>
</dbReference>
<dbReference type="GO" id="GO:0008295">
    <property type="term" value="P:spermidine biosynthetic process"/>
    <property type="evidence" value="ECO:0007669"/>
    <property type="project" value="UniProtKB-UniRule"/>
</dbReference>
<dbReference type="FunFam" id="3.60.90.10:FF:000001">
    <property type="entry name" value="S-adenosylmethionine decarboxylase proenzyme"/>
    <property type="match status" value="1"/>
</dbReference>
<dbReference type="Gene3D" id="3.60.90.10">
    <property type="entry name" value="S-adenosylmethionine decarboxylase"/>
    <property type="match status" value="1"/>
</dbReference>
<dbReference type="HAMAP" id="MF_00465">
    <property type="entry name" value="AdoMetDC_2"/>
    <property type="match status" value="1"/>
</dbReference>
<dbReference type="InterPro" id="IPR003826">
    <property type="entry name" value="AdoMetDC_fam_prok"/>
</dbReference>
<dbReference type="InterPro" id="IPR009165">
    <property type="entry name" value="S-AdoMet_deCO2ase_bac"/>
</dbReference>
<dbReference type="InterPro" id="IPR016067">
    <property type="entry name" value="S-AdoMet_deCO2ase_core"/>
</dbReference>
<dbReference type="NCBIfam" id="TIGR03331">
    <property type="entry name" value="SAM_DCase_Eco"/>
    <property type="match status" value="1"/>
</dbReference>
<dbReference type="PANTHER" id="PTHR33866">
    <property type="entry name" value="S-ADENOSYLMETHIONINE DECARBOXYLASE PROENZYME"/>
    <property type="match status" value="1"/>
</dbReference>
<dbReference type="PANTHER" id="PTHR33866:SF1">
    <property type="entry name" value="S-ADENOSYLMETHIONINE DECARBOXYLASE PROENZYME"/>
    <property type="match status" value="1"/>
</dbReference>
<dbReference type="Pfam" id="PF02675">
    <property type="entry name" value="AdoMet_dc"/>
    <property type="match status" value="1"/>
</dbReference>
<dbReference type="PIRSF" id="PIRSF001356">
    <property type="entry name" value="SAM_decarboxylas"/>
    <property type="match status" value="1"/>
</dbReference>
<dbReference type="SUPFAM" id="SSF56276">
    <property type="entry name" value="S-adenosylmethionine decarboxylase"/>
    <property type="match status" value="1"/>
</dbReference>
<reference key="1">
    <citation type="journal article" date="2009" name="PLoS Genet.">
        <title>Organised genome dynamics in the Escherichia coli species results in highly diverse adaptive paths.</title>
        <authorList>
            <person name="Touchon M."/>
            <person name="Hoede C."/>
            <person name="Tenaillon O."/>
            <person name="Barbe V."/>
            <person name="Baeriswyl S."/>
            <person name="Bidet P."/>
            <person name="Bingen E."/>
            <person name="Bonacorsi S."/>
            <person name="Bouchier C."/>
            <person name="Bouvet O."/>
            <person name="Calteau A."/>
            <person name="Chiapello H."/>
            <person name="Clermont O."/>
            <person name="Cruveiller S."/>
            <person name="Danchin A."/>
            <person name="Diard M."/>
            <person name="Dossat C."/>
            <person name="Karoui M.E."/>
            <person name="Frapy E."/>
            <person name="Garry L."/>
            <person name="Ghigo J.M."/>
            <person name="Gilles A.M."/>
            <person name="Johnson J."/>
            <person name="Le Bouguenec C."/>
            <person name="Lescat M."/>
            <person name="Mangenot S."/>
            <person name="Martinez-Jehanne V."/>
            <person name="Matic I."/>
            <person name="Nassif X."/>
            <person name="Oztas S."/>
            <person name="Petit M.A."/>
            <person name="Pichon C."/>
            <person name="Rouy Z."/>
            <person name="Ruf C.S."/>
            <person name="Schneider D."/>
            <person name="Tourret J."/>
            <person name="Vacherie B."/>
            <person name="Vallenet D."/>
            <person name="Medigue C."/>
            <person name="Rocha E.P.C."/>
            <person name="Denamur E."/>
        </authorList>
    </citation>
    <scope>NUCLEOTIDE SEQUENCE [LARGE SCALE GENOMIC DNA]</scope>
    <source>
        <strain>55989 / EAEC</strain>
    </source>
</reference>
<organism>
    <name type="scientific">Escherichia coli (strain 55989 / EAEC)</name>
    <dbReference type="NCBI Taxonomy" id="585055"/>
    <lineage>
        <taxon>Bacteria</taxon>
        <taxon>Pseudomonadati</taxon>
        <taxon>Pseudomonadota</taxon>
        <taxon>Gammaproteobacteria</taxon>
        <taxon>Enterobacterales</taxon>
        <taxon>Enterobacteriaceae</taxon>
        <taxon>Escherichia</taxon>
    </lineage>
</organism>
<keyword id="KW-0068">Autocatalytic cleavage</keyword>
<keyword id="KW-0210">Decarboxylase</keyword>
<keyword id="KW-0456">Lyase</keyword>
<keyword id="KW-0620">Polyamine biosynthesis</keyword>
<keyword id="KW-0670">Pyruvate</keyword>
<keyword id="KW-1185">Reference proteome</keyword>
<keyword id="KW-0949">S-adenosyl-L-methionine</keyword>
<keyword id="KW-0704">Schiff base</keyword>
<keyword id="KW-0745">Spermidine biosynthesis</keyword>
<keyword id="KW-0865">Zymogen</keyword>